<accession>Q3Z323</accession>
<evidence type="ECO:0000255" key="1">
    <source>
        <dbReference type="HAMAP-Rule" id="MF_01217"/>
    </source>
</evidence>
<evidence type="ECO:0000255" key="2">
    <source>
        <dbReference type="PROSITE-ProRule" id="PRU00258"/>
    </source>
</evidence>
<comment type="function">
    <text evidence="1">Carrier of the growing fatty acid chain in fatty acid biosynthesis.</text>
</comment>
<comment type="pathway">
    <text evidence="1">Lipid metabolism; fatty acid biosynthesis.</text>
</comment>
<comment type="subcellular location">
    <subcellularLocation>
        <location evidence="1">Cytoplasm</location>
    </subcellularLocation>
</comment>
<comment type="PTM">
    <text evidence="1">4'-phosphopantetheine is transferred from CoA to a specific serine of apo-ACP by AcpS. This modification is essential for activity because fatty acids are bound in thioester linkage to the sulfhydryl of the prosthetic group.</text>
</comment>
<comment type="similarity">
    <text evidence="1">Belongs to the acyl carrier protein (ACP) family.</text>
</comment>
<protein>
    <recommendedName>
        <fullName evidence="1">Acyl carrier protein</fullName>
        <shortName evidence="1">ACP</shortName>
    </recommendedName>
</protein>
<name>ACP_SHISS</name>
<reference key="1">
    <citation type="journal article" date="2005" name="Nucleic Acids Res.">
        <title>Genome dynamics and diversity of Shigella species, the etiologic agents of bacillary dysentery.</title>
        <authorList>
            <person name="Yang F."/>
            <person name="Yang J."/>
            <person name="Zhang X."/>
            <person name="Chen L."/>
            <person name="Jiang Y."/>
            <person name="Yan Y."/>
            <person name="Tang X."/>
            <person name="Wang J."/>
            <person name="Xiong Z."/>
            <person name="Dong J."/>
            <person name="Xue Y."/>
            <person name="Zhu Y."/>
            <person name="Xu X."/>
            <person name="Sun L."/>
            <person name="Chen S."/>
            <person name="Nie H."/>
            <person name="Peng J."/>
            <person name="Xu J."/>
            <person name="Wang Y."/>
            <person name="Yuan Z."/>
            <person name="Wen Y."/>
            <person name="Yao Z."/>
            <person name="Shen Y."/>
            <person name="Qiang B."/>
            <person name="Hou Y."/>
            <person name="Yu J."/>
            <person name="Jin Q."/>
        </authorList>
    </citation>
    <scope>NUCLEOTIDE SEQUENCE [LARGE SCALE GENOMIC DNA]</scope>
    <source>
        <strain>Ss046</strain>
    </source>
</reference>
<keyword id="KW-0963">Cytoplasm</keyword>
<keyword id="KW-0275">Fatty acid biosynthesis</keyword>
<keyword id="KW-0276">Fatty acid metabolism</keyword>
<keyword id="KW-0444">Lipid biosynthesis</keyword>
<keyword id="KW-0443">Lipid metabolism</keyword>
<keyword id="KW-0596">Phosphopantetheine</keyword>
<keyword id="KW-0597">Phosphoprotein</keyword>
<keyword id="KW-1185">Reference proteome</keyword>
<feature type="chain" id="PRO_1000066692" description="Acyl carrier protein">
    <location>
        <begin position="1"/>
        <end position="78"/>
    </location>
</feature>
<feature type="domain" description="Carrier" evidence="2">
    <location>
        <begin position="2"/>
        <end position="77"/>
    </location>
</feature>
<feature type="modified residue" description="O-(pantetheine 4'-phosphoryl)serine" evidence="2">
    <location>
        <position position="37"/>
    </location>
</feature>
<sequence length="78" mass="8640">MSTIEERVKKIIGEQLGVKQEEVTNNASFVEDLGADSLDTVELVMALEEEFDTEIPDEEAEKITTVQAAIDYINGHQA</sequence>
<dbReference type="EMBL" id="CP000038">
    <property type="protein sequence ID" value="AAZ87839.1"/>
    <property type="molecule type" value="Genomic_DNA"/>
</dbReference>
<dbReference type="RefSeq" id="WP_000103754.1">
    <property type="nucleotide sequence ID" value="NC_007384.1"/>
</dbReference>
<dbReference type="SMR" id="Q3Z323"/>
<dbReference type="GeneID" id="98387866"/>
<dbReference type="KEGG" id="ssn:SSON_1114"/>
<dbReference type="HOGENOM" id="CLU_108696_5_1_6"/>
<dbReference type="UniPathway" id="UPA00094"/>
<dbReference type="Proteomes" id="UP000002529">
    <property type="component" value="Chromosome"/>
</dbReference>
<dbReference type="GO" id="GO:0005829">
    <property type="term" value="C:cytosol"/>
    <property type="evidence" value="ECO:0007669"/>
    <property type="project" value="TreeGrafter"/>
</dbReference>
<dbReference type="GO" id="GO:0016020">
    <property type="term" value="C:membrane"/>
    <property type="evidence" value="ECO:0007669"/>
    <property type="project" value="GOC"/>
</dbReference>
<dbReference type="GO" id="GO:0000035">
    <property type="term" value="F:acyl binding"/>
    <property type="evidence" value="ECO:0007669"/>
    <property type="project" value="TreeGrafter"/>
</dbReference>
<dbReference type="GO" id="GO:0000036">
    <property type="term" value="F:acyl carrier activity"/>
    <property type="evidence" value="ECO:0007669"/>
    <property type="project" value="UniProtKB-UniRule"/>
</dbReference>
<dbReference type="GO" id="GO:0009245">
    <property type="term" value="P:lipid A biosynthetic process"/>
    <property type="evidence" value="ECO:0007669"/>
    <property type="project" value="TreeGrafter"/>
</dbReference>
<dbReference type="FunFam" id="1.10.1200.10:FF:000001">
    <property type="entry name" value="Acyl carrier protein"/>
    <property type="match status" value="1"/>
</dbReference>
<dbReference type="Gene3D" id="1.10.1200.10">
    <property type="entry name" value="ACP-like"/>
    <property type="match status" value="1"/>
</dbReference>
<dbReference type="HAMAP" id="MF_01217">
    <property type="entry name" value="Acyl_carrier"/>
    <property type="match status" value="1"/>
</dbReference>
<dbReference type="InterPro" id="IPR003231">
    <property type="entry name" value="ACP"/>
</dbReference>
<dbReference type="InterPro" id="IPR036736">
    <property type="entry name" value="ACP-like_sf"/>
</dbReference>
<dbReference type="InterPro" id="IPR009081">
    <property type="entry name" value="PP-bd_ACP"/>
</dbReference>
<dbReference type="InterPro" id="IPR006162">
    <property type="entry name" value="Ppantetheine_attach_site"/>
</dbReference>
<dbReference type="NCBIfam" id="TIGR00517">
    <property type="entry name" value="acyl_carrier"/>
    <property type="match status" value="1"/>
</dbReference>
<dbReference type="NCBIfam" id="NF002148">
    <property type="entry name" value="PRK00982.1-2"/>
    <property type="match status" value="1"/>
</dbReference>
<dbReference type="NCBIfam" id="NF002149">
    <property type="entry name" value="PRK00982.1-3"/>
    <property type="match status" value="1"/>
</dbReference>
<dbReference type="NCBIfam" id="NF002150">
    <property type="entry name" value="PRK00982.1-4"/>
    <property type="match status" value="1"/>
</dbReference>
<dbReference type="NCBIfam" id="NF002151">
    <property type="entry name" value="PRK00982.1-5"/>
    <property type="match status" value="1"/>
</dbReference>
<dbReference type="PANTHER" id="PTHR20863">
    <property type="entry name" value="ACYL CARRIER PROTEIN"/>
    <property type="match status" value="1"/>
</dbReference>
<dbReference type="PANTHER" id="PTHR20863:SF76">
    <property type="entry name" value="CARRIER DOMAIN-CONTAINING PROTEIN"/>
    <property type="match status" value="1"/>
</dbReference>
<dbReference type="Pfam" id="PF00550">
    <property type="entry name" value="PP-binding"/>
    <property type="match status" value="1"/>
</dbReference>
<dbReference type="SUPFAM" id="SSF47336">
    <property type="entry name" value="ACP-like"/>
    <property type="match status" value="1"/>
</dbReference>
<dbReference type="PROSITE" id="PS50075">
    <property type="entry name" value="CARRIER"/>
    <property type="match status" value="1"/>
</dbReference>
<dbReference type="PROSITE" id="PS00012">
    <property type="entry name" value="PHOSPHOPANTETHEINE"/>
    <property type="match status" value="1"/>
</dbReference>
<gene>
    <name evidence="1" type="primary">acpP</name>
    <name type="ordered locus">SSON_1114</name>
</gene>
<proteinExistence type="inferred from homology"/>
<organism>
    <name type="scientific">Shigella sonnei (strain Ss046)</name>
    <dbReference type="NCBI Taxonomy" id="300269"/>
    <lineage>
        <taxon>Bacteria</taxon>
        <taxon>Pseudomonadati</taxon>
        <taxon>Pseudomonadota</taxon>
        <taxon>Gammaproteobacteria</taxon>
        <taxon>Enterobacterales</taxon>
        <taxon>Enterobacteriaceae</taxon>
        <taxon>Shigella</taxon>
    </lineage>
</organism>